<reference key="1">
    <citation type="journal article" date="2001" name="Nature">
        <title>Genome sequence of Yersinia pestis, the causative agent of plague.</title>
        <authorList>
            <person name="Parkhill J."/>
            <person name="Wren B.W."/>
            <person name="Thomson N.R."/>
            <person name="Titball R.W."/>
            <person name="Holden M.T.G."/>
            <person name="Prentice M.B."/>
            <person name="Sebaihia M."/>
            <person name="James K.D."/>
            <person name="Churcher C.M."/>
            <person name="Mungall K.L."/>
            <person name="Baker S."/>
            <person name="Basham D."/>
            <person name="Bentley S.D."/>
            <person name="Brooks K."/>
            <person name="Cerdeno-Tarraga A.-M."/>
            <person name="Chillingworth T."/>
            <person name="Cronin A."/>
            <person name="Davies R.M."/>
            <person name="Davis P."/>
            <person name="Dougan G."/>
            <person name="Feltwell T."/>
            <person name="Hamlin N."/>
            <person name="Holroyd S."/>
            <person name="Jagels K."/>
            <person name="Karlyshev A.V."/>
            <person name="Leather S."/>
            <person name="Moule S."/>
            <person name="Oyston P.C.F."/>
            <person name="Quail M.A."/>
            <person name="Rutherford K.M."/>
            <person name="Simmonds M."/>
            <person name="Skelton J."/>
            <person name="Stevens K."/>
            <person name="Whitehead S."/>
            <person name="Barrell B.G."/>
        </authorList>
    </citation>
    <scope>NUCLEOTIDE SEQUENCE [LARGE SCALE GENOMIC DNA]</scope>
    <source>
        <strain>CO-92 / Biovar Orientalis</strain>
    </source>
</reference>
<reference key="2">
    <citation type="journal article" date="2002" name="J. Bacteriol.">
        <title>Genome sequence of Yersinia pestis KIM.</title>
        <authorList>
            <person name="Deng W."/>
            <person name="Burland V."/>
            <person name="Plunkett G. III"/>
            <person name="Boutin A."/>
            <person name="Mayhew G.F."/>
            <person name="Liss P."/>
            <person name="Perna N.T."/>
            <person name="Rose D.J."/>
            <person name="Mau B."/>
            <person name="Zhou S."/>
            <person name="Schwartz D.C."/>
            <person name="Fetherston J.D."/>
            <person name="Lindler L.E."/>
            <person name="Brubaker R.R."/>
            <person name="Plano G.V."/>
            <person name="Straley S.C."/>
            <person name="McDonough K.A."/>
            <person name="Nilles M.L."/>
            <person name="Matson J.S."/>
            <person name="Blattner F.R."/>
            <person name="Perry R.D."/>
        </authorList>
    </citation>
    <scope>NUCLEOTIDE SEQUENCE [LARGE SCALE GENOMIC DNA]</scope>
    <source>
        <strain>KIM10+ / Biovar Mediaevalis</strain>
    </source>
</reference>
<reference key="3">
    <citation type="journal article" date="2004" name="DNA Res.">
        <title>Complete genome sequence of Yersinia pestis strain 91001, an isolate avirulent to humans.</title>
        <authorList>
            <person name="Song Y."/>
            <person name="Tong Z."/>
            <person name="Wang J."/>
            <person name="Wang L."/>
            <person name="Guo Z."/>
            <person name="Han Y."/>
            <person name="Zhang J."/>
            <person name="Pei D."/>
            <person name="Zhou D."/>
            <person name="Qin H."/>
            <person name="Pang X."/>
            <person name="Han Y."/>
            <person name="Zhai J."/>
            <person name="Li M."/>
            <person name="Cui B."/>
            <person name="Qi Z."/>
            <person name="Jin L."/>
            <person name="Dai R."/>
            <person name="Chen F."/>
            <person name="Li S."/>
            <person name="Ye C."/>
            <person name="Du Z."/>
            <person name="Lin W."/>
            <person name="Wang J."/>
            <person name="Yu J."/>
            <person name="Yang H."/>
            <person name="Wang J."/>
            <person name="Huang P."/>
            <person name="Yang R."/>
        </authorList>
    </citation>
    <scope>NUCLEOTIDE SEQUENCE [LARGE SCALE GENOMIC DNA]</scope>
    <source>
        <strain>91001 / Biovar Mediaevalis</strain>
    </source>
</reference>
<accession>Q8ZCQ2</accession>
<accession>Q0WCY7</accession>
<dbReference type="EC" id="6.3.5.3" evidence="1"/>
<dbReference type="EMBL" id="AL590842">
    <property type="protein sequence ID" value="CAL21529.1"/>
    <property type="molecule type" value="Genomic_DNA"/>
</dbReference>
<dbReference type="EMBL" id="AE009952">
    <property type="protein sequence ID" value="AAM84883.1"/>
    <property type="molecule type" value="Genomic_DNA"/>
</dbReference>
<dbReference type="EMBL" id="AE017042">
    <property type="protein sequence ID" value="AAS62733.1"/>
    <property type="molecule type" value="Genomic_DNA"/>
</dbReference>
<dbReference type="PIR" id="AF0355">
    <property type="entry name" value="AF0355"/>
</dbReference>
<dbReference type="RefSeq" id="WP_002211561.1">
    <property type="nucleotide sequence ID" value="NZ_WHKM01000095.1"/>
</dbReference>
<dbReference type="RefSeq" id="YP_002347851.1">
    <property type="nucleotide sequence ID" value="NC_003143.1"/>
</dbReference>
<dbReference type="SMR" id="Q8ZCQ2"/>
<dbReference type="IntAct" id="Q8ZCQ2">
    <property type="interactions" value="10"/>
</dbReference>
<dbReference type="STRING" id="214092.YPO2921"/>
<dbReference type="MEROPS" id="C56.972"/>
<dbReference type="PaxDb" id="214092-YPO2921"/>
<dbReference type="DNASU" id="1146256"/>
<dbReference type="EnsemblBacteria" id="AAS62733">
    <property type="protein sequence ID" value="AAS62733"/>
    <property type="gene ID" value="YP_2536"/>
</dbReference>
<dbReference type="GeneID" id="57975875"/>
<dbReference type="KEGG" id="ype:YPO2921"/>
<dbReference type="KEGG" id="ypk:y1309"/>
<dbReference type="KEGG" id="ypm:YP_2536"/>
<dbReference type="PATRIC" id="fig|214092.21.peg.3371"/>
<dbReference type="eggNOG" id="COG0046">
    <property type="taxonomic scope" value="Bacteria"/>
</dbReference>
<dbReference type="eggNOG" id="COG0047">
    <property type="taxonomic scope" value="Bacteria"/>
</dbReference>
<dbReference type="HOGENOM" id="CLU_001031_0_2_6"/>
<dbReference type="OMA" id="LSANWMW"/>
<dbReference type="OrthoDB" id="9804441at2"/>
<dbReference type="UniPathway" id="UPA00074">
    <property type="reaction ID" value="UER00128"/>
</dbReference>
<dbReference type="Proteomes" id="UP000000815">
    <property type="component" value="Chromosome"/>
</dbReference>
<dbReference type="Proteomes" id="UP000001019">
    <property type="component" value="Chromosome"/>
</dbReference>
<dbReference type="Proteomes" id="UP000002490">
    <property type="component" value="Chromosome"/>
</dbReference>
<dbReference type="GO" id="GO:0005737">
    <property type="term" value="C:cytoplasm"/>
    <property type="evidence" value="ECO:0000318"/>
    <property type="project" value="GO_Central"/>
</dbReference>
<dbReference type="GO" id="GO:0005524">
    <property type="term" value="F:ATP binding"/>
    <property type="evidence" value="ECO:0007669"/>
    <property type="project" value="UniProtKB-UniRule"/>
</dbReference>
<dbReference type="GO" id="GO:0046872">
    <property type="term" value="F:metal ion binding"/>
    <property type="evidence" value="ECO:0007669"/>
    <property type="project" value="UniProtKB-KW"/>
</dbReference>
<dbReference type="GO" id="GO:0004642">
    <property type="term" value="F:phosphoribosylformylglycinamidine synthase activity"/>
    <property type="evidence" value="ECO:0000318"/>
    <property type="project" value="GO_Central"/>
</dbReference>
<dbReference type="GO" id="GO:0006189">
    <property type="term" value="P:'de novo' IMP biosynthetic process"/>
    <property type="evidence" value="ECO:0007669"/>
    <property type="project" value="UniProtKB-UniRule"/>
</dbReference>
<dbReference type="GO" id="GO:0006164">
    <property type="term" value="P:purine nucleotide biosynthetic process"/>
    <property type="evidence" value="ECO:0000318"/>
    <property type="project" value="GO_Central"/>
</dbReference>
<dbReference type="CDD" id="cd01740">
    <property type="entry name" value="GATase1_FGAR_AT"/>
    <property type="match status" value="1"/>
</dbReference>
<dbReference type="CDD" id="cd02203">
    <property type="entry name" value="PurL_repeat1"/>
    <property type="match status" value="1"/>
</dbReference>
<dbReference type="FunFam" id="1.10.8.750:FF:000002">
    <property type="entry name" value="Phosphoribosylformylglycinamidine synthase"/>
    <property type="match status" value="1"/>
</dbReference>
<dbReference type="FunFam" id="3.30.1330.10:FF:000002">
    <property type="entry name" value="Phosphoribosylformylglycinamidine synthase"/>
    <property type="match status" value="1"/>
</dbReference>
<dbReference type="FunFam" id="3.30.1330.10:FF:000005">
    <property type="entry name" value="Phosphoribosylformylglycinamidine synthase"/>
    <property type="match status" value="1"/>
</dbReference>
<dbReference type="FunFam" id="3.40.50.880:FF:000008">
    <property type="entry name" value="Phosphoribosylformylglycinamidine synthase"/>
    <property type="match status" value="1"/>
</dbReference>
<dbReference type="FunFam" id="3.90.650.10:FF:000002">
    <property type="entry name" value="Phosphoribosylformylglycinamidine synthase"/>
    <property type="match status" value="1"/>
</dbReference>
<dbReference type="FunFam" id="3.90.650.10:FF:000005">
    <property type="entry name" value="Phosphoribosylformylglycinamidine synthase"/>
    <property type="match status" value="1"/>
</dbReference>
<dbReference type="Gene3D" id="3.40.50.880">
    <property type="match status" value="1"/>
</dbReference>
<dbReference type="Gene3D" id="1.10.8.750">
    <property type="entry name" value="Phosphoribosylformylglycinamidine synthase, linker domain"/>
    <property type="match status" value="1"/>
</dbReference>
<dbReference type="Gene3D" id="3.90.650.10">
    <property type="entry name" value="PurM-like C-terminal domain"/>
    <property type="match status" value="2"/>
</dbReference>
<dbReference type="Gene3D" id="3.30.1330.10">
    <property type="entry name" value="PurM-like, N-terminal domain"/>
    <property type="match status" value="2"/>
</dbReference>
<dbReference type="HAMAP" id="MF_00419">
    <property type="entry name" value="PurL_1"/>
    <property type="match status" value="1"/>
</dbReference>
<dbReference type="InterPro" id="IPR029062">
    <property type="entry name" value="Class_I_gatase-like"/>
</dbReference>
<dbReference type="InterPro" id="IPR040707">
    <property type="entry name" value="FGAR-AT_N"/>
</dbReference>
<dbReference type="InterPro" id="IPR055181">
    <property type="entry name" value="FGAR-AT_PurM_N-like"/>
</dbReference>
<dbReference type="InterPro" id="IPR010073">
    <property type="entry name" value="PurL_large"/>
</dbReference>
<dbReference type="InterPro" id="IPR041609">
    <property type="entry name" value="PurL_linker"/>
</dbReference>
<dbReference type="InterPro" id="IPR010918">
    <property type="entry name" value="PurM-like_C_dom"/>
</dbReference>
<dbReference type="InterPro" id="IPR036676">
    <property type="entry name" value="PurM-like_C_sf"/>
</dbReference>
<dbReference type="InterPro" id="IPR036921">
    <property type="entry name" value="PurM-like_N_sf"/>
</dbReference>
<dbReference type="InterPro" id="IPR036604">
    <property type="entry name" value="PurS-like_sf"/>
</dbReference>
<dbReference type="NCBIfam" id="TIGR01735">
    <property type="entry name" value="FGAM_synt"/>
    <property type="match status" value="1"/>
</dbReference>
<dbReference type="NCBIfam" id="NF003672">
    <property type="entry name" value="PRK05297.1"/>
    <property type="match status" value="1"/>
</dbReference>
<dbReference type="PANTHER" id="PTHR10099">
    <property type="entry name" value="PHOSPHORIBOSYLFORMYLGLYCINAMIDINE SYNTHASE"/>
    <property type="match status" value="1"/>
</dbReference>
<dbReference type="PANTHER" id="PTHR10099:SF1">
    <property type="entry name" value="PHOSPHORIBOSYLFORMYLGLYCINAMIDINE SYNTHASE"/>
    <property type="match status" value="1"/>
</dbReference>
<dbReference type="Pfam" id="PF02769">
    <property type="entry name" value="AIRS_C"/>
    <property type="match status" value="2"/>
</dbReference>
<dbReference type="Pfam" id="PF18072">
    <property type="entry name" value="FGAR-AT_linker"/>
    <property type="match status" value="1"/>
</dbReference>
<dbReference type="Pfam" id="PF18076">
    <property type="entry name" value="FGAR-AT_N"/>
    <property type="match status" value="1"/>
</dbReference>
<dbReference type="Pfam" id="PF22689">
    <property type="entry name" value="FGAR-AT_PurM_N-like"/>
    <property type="match status" value="1"/>
</dbReference>
<dbReference type="Pfam" id="PF13507">
    <property type="entry name" value="GATase_5"/>
    <property type="match status" value="1"/>
</dbReference>
<dbReference type="SMART" id="SM01211">
    <property type="entry name" value="GATase_5"/>
    <property type="match status" value="1"/>
</dbReference>
<dbReference type="SUPFAM" id="SSF52317">
    <property type="entry name" value="Class I glutamine amidotransferase-like"/>
    <property type="match status" value="1"/>
</dbReference>
<dbReference type="SUPFAM" id="SSF109736">
    <property type="entry name" value="FGAM synthase PurL, linker domain"/>
    <property type="match status" value="1"/>
</dbReference>
<dbReference type="SUPFAM" id="SSF56042">
    <property type="entry name" value="PurM C-terminal domain-like"/>
    <property type="match status" value="2"/>
</dbReference>
<dbReference type="SUPFAM" id="SSF55326">
    <property type="entry name" value="PurM N-terminal domain-like"/>
    <property type="match status" value="2"/>
</dbReference>
<dbReference type="SUPFAM" id="SSF82697">
    <property type="entry name" value="PurS-like"/>
    <property type="match status" value="1"/>
</dbReference>
<dbReference type="PROSITE" id="PS51273">
    <property type="entry name" value="GATASE_TYPE_1"/>
    <property type="match status" value="1"/>
</dbReference>
<sequence length="1296" mass="142048">MEILRGSPALSAFRITKLLSRCQDAHLLVSDIYAEYVHFADVSAPLSADEHARLQRLLQYGPSLPEHPPAGRLLLVTPRPGTISPWSSKATDIAHNCGLSQILRLERGLAFSIQGPDLNESQWKQLAALLHDRMMEAVFTDLQQAEQLFSHHQPAPVQRVDILGQGRSALEQANIKLGLALAQDEIDYLLTAFTGLGRNPTDIELYMFAQANSEHCRHKIFNADWVIDGVVQPKTLFKMIKNTFEHTPDYVLSAYKDNAAVMEGSQVGRFYATAEKGIYDYHQEEAHILMKVETHNHPTAISPWPGAATGSGGEIRDEGATGRGAKPKAGLVGFSVSNLRIPGFEQPWEENFGKPDRIVTALDIMTEGPLGGAAFNNEFGRPALLGYFRTYEERVNSHNGIELRGYHKPIMLAGGLGNIRADHVQKGEITVGAKLVVLGGPSMNIGLGGGAASSMASGQSDADLDFASVQRDNPEMERRCQEVIDRCWQLGEYNPILFIHDVGAGGLSNAMPELVNDGGRGGRFELRDILNDEPGMSPLEVWCNESQERYVLAVAPAQMALFDEICRRERAPYAVIGEATEEKHLLLNDRHFGNQPIDMPLDVLLGKTPKMLRDVTRLQAKGDALQRADISLAEAVKRIMHLPAVAEKTFLITIGDRTVTGMVTRDQMVGPWQIPVADCAVTSASLDSYYGEAMSLGERAPVALLDFAASARLAVGEALTNIAATQIGELKRIKLSANWMSAAGHPGEDAGLYDAVRAVGEELCPALEITIPVGKDSMSMKTRWQEGHEQREMTSPLSLVITAFARIEDVRRTVTPQLRTDKGDNALLLIDLGAGHNALGATALTQVYRQLGDKPADVRNVQQLAGFFNAMQRLVADQHLLAYHDRSDGGLLVTLAEMAFAGHCGVTVDIQSLGNDALAALFNEELGAVIQVRAEQRADVEKLLADHGLANCVHYLGRAVAGDTFDIRSGTDVVYSEKRSTLRLWWAETSWQMQRLRDNPDCADQEHQAKQDESDPGLNVKLTFDPAEDIAAPFILKQARPKVAVLREQGVNSHVEMAAAFHRAGFDAVDVHMSDLLAGRTDLQSFQTLVACGGFSYGDVLGAGEGWAKSILFNDRVRDEFEAFFHRPTTLALGVCNGCQMMSNLRELIPGAEHWPRFVRNLSDSFEARFSLVEVASSPSLFMQDMVGSRMPIAVSHGEGQVEVRDAAHLAALEQSHLVALRFVNNHGVVTEQYPANPNGSANGITAVTSVSGRATVMMPHPERVFRTVSNSWHPEEWGEDSPWMRMFRNARKQLG</sequence>
<proteinExistence type="inferred from homology"/>
<name>PUR4_YERPE</name>
<comment type="function">
    <text evidence="1">Phosphoribosylformylglycinamidine synthase involved in the purines biosynthetic pathway. Catalyzes the ATP-dependent conversion of formylglycinamide ribonucleotide (FGAR) and glutamine to yield formylglycinamidine ribonucleotide (FGAM) and glutamate.</text>
</comment>
<comment type="catalytic activity">
    <reaction evidence="1">
        <text>N(2)-formyl-N(1)-(5-phospho-beta-D-ribosyl)glycinamide + L-glutamine + ATP + H2O = 2-formamido-N(1)-(5-O-phospho-beta-D-ribosyl)acetamidine + L-glutamate + ADP + phosphate + H(+)</text>
        <dbReference type="Rhea" id="RHEA:17129"/>
        <dbReference type="ChEBI" id="CHEBI:15377"/>
        <dbReference type="ChEBI" id="CHEBI:15378"/>
        <dbReference type="ChEBI" id="CHEBI:29985"/>
        <dbReference type="ChEBI" id="CHEBI:30616"/>
        <dbReference type="ChEBI" id="CHEBI:43474"/>
        <dbReference type="ChEBI" id="CHEBI:58359"/>
        <dbReference type="ChEBI" id="CHEBI:147286"/>
        <dbReference type="ChEBI" id="CHEBI:147287"/>
        <dbReference type="ChEBI" id="CHEBI:456216"/>
        <dbReference type="EC" id="6.3.5.3"/>
    </reaction>
</comment>
<comment type="pathway">
    <text evidence="1">Purine metabolism; IMP biosynthesis via de novo pathway; 5-amino-1-(5-phospho-D-ribosyl)imidazole from N(2)-formyl-N(1)-(5-phospho-D-ribosyl)glycinamide: step 1/2.</text>
</comment>
<comment type="subunit">
    <text evidence="1">Monomer.</text>
</comment>
<comment type="subcellular location">
    <subcellularLocation>
        <location evidence="1">Cytoplasm</location>
    </subcellularLocation>
</comment>
<comment type="similarity">
    <text evidence="1">In the N-terminal section; belongs to the FGAMS family.</text>
</comment>
<feature type="chain" id="PRO_0000100428" description="Phosphoribosylformylglycinamidine synthase">
    <location>
        <begin position="1"/>
        <end position="1296"/>
    </location>
</feature>
<feature type="domain" description="Glutamine amidotransferase type-1" evidence="1">
    <location>
        <begin position="1043"/>
        <end position="1296"/>
    </location>
</feature>
<feature type="region of interest" description="Disordered" evidence="2">
    <location>
        <begin position="304"/>
        <end position="323"/>
    </location>
</feature>
<feature type="region of interest" description="Disordered" evidence="2">
    <location>
        <begin position="1000"/>
        <end position="1019"/>
    </location>
</feature>
<feature type="compositionally biased region" description="Basic and acidic residues" evidence="2">
    <location>
        <begin position="1000"/>
        <end position="1013"/>
    </location>
</feature>
<feature type="active site" description="Nucleophile" evidence="1">
    <location>
        <position position="1136"/>
    </location>
</feature>
<feature type="active site" evidence="1">
    <location>
        <position position="1261"/>
    </location>
</feature>
<feature type="active site" evidence="1">
    <location>
        <position position="1263"/>
    </location>
</feature>
<feature type="binding site" evidence="1">
    <location>
        <begin position="306"/>
        <end position="317"/>
    </location>
    <ligand>
        <name>ATP</name>
        <dbReference type="ChEBI" id="CHEBI:30616"/>
    </ligand>
</feature>
<feature type="binding site" evidence="1">
    <location>
        <position position="677"/>
    </location>
    <ligand>
        <name>ATP</name>
        <dbReference type="ChEBI" id="CHEBI:30616"/>
    </ligand>
</feature>
<feature type="binding site" evidence="1">
    <location>
        <position position="678"/>
    </location>
    <ligand>
        <name>Mg(2+)</name>
        <dbReference type="ChEBI" id="CHEBI:18420"/>
    </ligand>
</feature>
<feature type="binding site" evidence="1">
    <location>
        <position position="717"/>
    </location>
    <ligand>
        <name>Mg(2+)</name>
        <dbReference type="ChEBI" id="CHEBI:18420"/>
    </ligand>
</feature>
<feature type="binding site" evidence="1">
    <location>
        <position position="721"/>
    </location>
    <ligand>
        <name>Mg(2+)</name>
        <dbReference type="ChEBI" id="CHEBI:18420"/>
    </ligand>
</feature>
<feature type="binding site" evidence="1">
    <location>
        <position position="885"/>
    </location>
    <ligand>
        <name>Mg(2+)</name>
        <dbReference type="ChEBI" id="CHEBI:18420"/>
    </ligand>
</feature>
<feature type="binding site" evidence="1">
    <location>
        <position position="887"/>
    </location>
    <ligand>
        <name>ATP</name>
        <dbReference type="ChEBI" id="CHEBI:30616"/>
    </ligand>
</feature>
<feature type="sequence conflict" description="In Ref. 2; AAM84883 and 3; AAS62733." evidence="3" ref="2 3">
    <original>L</original>
    <variation>P</variation>
    <location>
        <position position="28"/>
    </location>
</feature>
<protein>
    <recommendedName>
        <fullName evidence="1">Phosphoribosylformylglycinamidine synthase</fullName>
        <shortName evidence="1">FGAM synthase</shortName>
        <shortName evidence="1">FGAMS</shortName>
        <ecNumber evidence="1">6.3.5.3</ecNumber>
    </recommendedName>
    <alternativeName>
        <fullName evidence="1">Formylglycinamide ribonucleotide amidotransferase</fullName>
        <shortName evidence="1">FGAR amidotransferase</shortName>
        <shortName evidence="1">FGAR-AT</shortName>
    </alternativeName>
</protein>
<keyword id="KW-0067">ATP-binding</keyword>
<keyword id="KW-0963">Cytoplasm</keyword>
<keyword id="KW-0315">Glutamine amidotransferase</keyword>
<keyword id="KW-0436">Ligase</keyword>
<keyword id="KW-0460">Magnesium</keyword>
<keyword id="KW-0479">Metal-binding</keyword>
<keyword id="KW-0547">Nucleotide-binding</keyword>
<keyword id="KW-0658">Purine biosynthesis</keyword>
<keyword id="KW-1185">Reference proteome</keyword>
<organism>
    <name type="scientific">Yersinia pestis</name>
    <dbReference type="NCBI Taxonomy" id="632"/>
    <lineage>
        <taxon>Bacteria</taxon>
        <taxon>Pseudomonadati</taxon>
        <taxon>Pseudomonadota</taxon>
        <taxon>Gammaproteobacteria</taxon>
        <taxon>Enterobacterales</taxon>
        <taxon>Yersiniaceae</taxon>
        <taxon>Yersinia</taxon>
    </lineage>
</organism>
<gene>
    <name evidence="1" type="primary">purL</name>
    <name type="ordered locus">YPO2921</name>
    <name type="ordered locus">y1309</name>
    <name type="ordered locus">YP_2536</name>
</gene>
<evidence type="ECO:0000255" key="1">
    <source>
        <dbReference type="HAMAP-Rule" id="MF_00419"/>
    </source>
</evidence>
<evidence type="ECO:0000256" key="2">
    <source>
        <dbReference type="SAM" id="MobiDB-lite"/>
    </source>
</evidence>
<evidence type="ECO:0000305" key="3"/>